<gene>
    <name type="primary">atp1a1</name>
</gene>
<sequence>MGVGDGRDQYELAAMSEQSGKKKSKNKKEKKEKDMDELKKEVDLDDHKLSLEELHHKYGTDLSKGLSNSRAEEILARDGPNALTPPPTTPEWVKFCKQMFGGFSMLLWTGAVLCFLAYGILAAMEDEPANDNLYLGVVLSAVVIITGCFSYYQDAKSSKIMDSFKNLVPQQALVVRDGEKKQINAEEVVIGDLVEVKGGDRIPADLRIISSHGCKVDNSSLTGESEPQTRSPDFSNDNPLETKNIAFFSTNCVEGTARGIVISTGDRTVMGRIATLASGLEVGRTPISIEIEHFIHIITGVAVFLGVSFLLLSLVLGYSWLEAVIFLIGIIVANVPEGLLATVTVCLTLTAKRMAKKNCLVKNLEAVETLGSTSTICSDKTGTLTQNRMTVAHMWFDNQIHEADTTENQSGTSFDRSSDTWASLARIAGLCNRAVFLAEQIDVPILKRDVAGDASESALLKCIELCCGSVKEMREKFTKVAEIPFNSTNKYQLSVHKIPSGGKESQHLLVMKGAPERILDRCATIMIQGKEQLLDDEIKESFQNAYLELGGLGERVLGFCHFYLPDEQFPEGFQFDADDVNFPTENLCFVGLMSMIDPPRAAVPDAVGKCRSAGIKVIMVTGDHPITAKAIAKGVGIISEGNETVEDIAARLNIPVNEVNPRDAKACVVHGGDLKDLSCEQLDDILKYHTEIVFARTSPQQKLIIVEGCQRTGAIVAVTGDGVNDSPALKKADIGVAMGIAGSDVSKQAADMILLDDNFASIVTGVEEGRLIFDNLKKSIAYTLTSNIPEITPFLFFIIANIPLPLGTVTILCIDLGTDMLPAISLAYEAAESDIMKRQPRNPKTDKLVNERLISIAYGQIGMIQALAGFFTYFVILAENGFLPPRLLGIRMNWDDKYINDLEDSYGQQWTYEQRKIVEFTCHTAFFTSIVIVQWADLIICKTRRNSVFQQGMKNKILIFGLFEETALAAFLSYCPGMDVALRMYPLKPNWWFCAFPYSLLIFIYDEIRKLILRRNPGGWMERETYY</sequence>
<feature type="propeptide" id="PRO_0000002497" evidence="1">
    <location>
        <begin position="1"/>
        <end position="5"/>
    </location>
</feature>
<feature type="chain" id="PRO_0000002498" description="Sodium/potassium-transporting ATPase subunit alpha-1">
    <location>
        <begin position="6"/>
        <end position="1027"/>
    </location>
</feature>
<feature type="topological domain" description="Cytoplasmic" evidence="3">
    <location>
        <begin position="6"/>
        <end position="90"/>
    </location>
</feature>
<feature type="transmembrane region" description="Helical" evidence="3">
    <location>
        <begin position="91"/>
        <end position="111"/>
    </location>
</feature>
<feature type="topological domain" description="Extracellular" evidence="3">
    <location>
        <begin position="112"/>
        <end position="134"/>
    </location>
</feature>
<feature type="transmembrane region" description="Helical" evidence="3">
    <location>
        <begin position="135"/>
        <end position="155"/>
    </location>
</feature>
<feature type="topological domain" description="Cytoplasmic" evidence="3">
    <location>
        <begin position="156"/>
        <end position="291"/>
    </location>
</feature>
<feature type="transmembrane region" description="Helical" evidence="3">
    <location>
        <begin position="292"/>
        <end position="311"/>
    </location>
</feature>
<feature type="topological domain" description="Extracellular" evidence="3">
    <location>
        <begin position="312"/>
        <end position="323"/>
    </location>
</feature>
<feature type="transmembrane region" description="Helical" evidence="3">
    <location>
        <begin position="324"/>
        <end position="341"/>
    </location>
</feature>
<feature type="topological domain" description="Cytoplasmic" evidence="3">
    <location>
        <begin position="342"/>
        <end position="776"/>
    </location>
</feature>
<feature type="transmembrane region" description="Helical" evidence="3">
    <location>
        <begin position="777"/>
        <end position="796"/>
    </location>
</feature>
<feature type="topological domain" description="Extracellular" evidence="3">
    <location>
        <begin position="797"/>
        <end position="806"/>
    </location>
</feature>
<feature type="transmembrane region" description="Helical" evidence="3">
    <location>
        <begin position="807"/>
        <end position="827"/>
    </location>
</feature>
<feature type="topological domain" description="Cytoplasmic" evidence="3">
    <location>
        <begin position="828"/>
        <end position="847"/>
    </location>
</feature>
<feature type="transmembrane region" description="Helical" evidence="3">
    <location>
        <begin position="848"/>
        <end position="870"/>
    </location>
</feature>
<feature type="topological domain" description="Extracellular" evidence="3">
    <location>
        <begin position="871"/>
        <end position="922"/>
    </location>
</feature>
<feature type="transmembrane region" description="Helical" evidence="3">
    <location>
        <begin position="923"/>
        <end position="942"/>
    </location>
</feature>
<feature type="topological domain" description="Cytoplasmic" evidence="3">
    <location>
        <begin position="943"/>
        <end position="955"/>
    </location>
</feature>
<feature type="transmembrane region" description="Helical" evidence="3">
    <location>
        <begin position="956"/>
        <end position="974"/>
    </location>
</feature>
<feature type="topological domain" description="Extracellular" evidence="3">
    <location>
        <begin position="975"/>
        <end position="989"/>
    </location>
</feature>
<feature type="transmembrane region" description="Helical" evidence="3">
    <location>
        <begin position="990"/>
        <end position="1010"/>
    </location>
</feature>
<feature type="topological domain" description="Cytoplasmic" evidence="3">
    <location>
        <begin position="1011"/>
        <end position="1027"/>
    </location>
</feature>
<feature type="region of interest" description="Disordered" evidence="4">
    <location>
        <begin position="1"/>
        <end position="39"/>
    </location>
</feature>
<feature type="region of interest" description="Interaction with phosphoinositide-3 kinase" evidence="1">
    <location>
        <begin position="85"/>
        <end position="87"/>
    </location>
</feature>
<feature type="region of interest" description="Disordered" evidence="4">
    <location>
        <begin position="217"/>
        <end position="238"/>
    </location>
</feature>
<feature type="compositionally biased region" description="Basic and acidic residues" evidence="4">
    <location>
        <begin position="1"/>
        <end position="10"/>
    </location>
</feature>
<feature type="compositionally biased region" description="Basic and acidic residues" evidence="4">
    <location>
        <begin position="29"/>
        <end position="39"/>
    </location>
</feature>
<feature type="active site" description="4-aspartylphosphate intermediate" evidence="1">
    <location>
        <position position="379"/>
    </location>
</feature>
<feature type="binding site" evidence="1">
    <location>
        <position position="490"/>
    </location>
    <ligand>
        <name>ATP</name>
        <dbReference type="ChEBI" id="CHEBI:30616"/>
    </ligand>
</feature>
<feature type="binding site" evidence="1">
    <location>
        <position position="721"/>
    </location>
    <ligand>
        <name>Mg(2+)</name>
        <dbReference type="ChEBI" id="CHEBI:18420"/>
    </ligand>
</feature>
<feature type="binding site" evidence="1">
    <location>
        <position position="725"/>
    </location>
    <ligand>
        <name>Mg(2+)</name>
        <dbReference type="ChEBI" id="CHEBI:18420"/>
    </ligand>
</feature>
<feature type="modified residue" description="Phosphoserine; by PKC" evidence="1">
    <location>
        <position position="16"/>
    </location>
</feature>
<feature type="modified residue" description="Phosphoserine; by PKA" evidence="1">
    <location>
        <position position="947"/>
    </location>
</feature>
<proteinExistence type="evidence at transcript level"/>
<protein>
    <recommendedName>
        <fullName>Sodium/potassium-transporting ATPase subunit alpha-1</fullName>
        <shortName>Na(+)/K(+) ATPase alpha-1 subunit</shortName>
        <ecNumber>7.2.2.13</ecNumber>
    </recommendedName>
    <alternativeName>
        <fullName>Sodium pump subunit alpha-1</fullName>
    </alternativeName>
</protein>
<organism>
    <name type="scientific">Catostomus commersonii</name>
    <name type="common">White sucker</name>
    <name type="synonym">Cyprinus commersonnii</name>
    <dbReference type="NCBI Taxonomy" id="7971"/>
    <lineage>
        <taxon>Eukaryota</taxon>
        <taxon>Metazoa</taxon>
        <taxon>Chordata</taxon>
        <taxon>Craniata</taxon>
        <taxon>Vertebrata</taxon>
        <taxon>Euteleostomi</taxon>
        <taxon>Actinopterygii</taxon>
        <taxon>Neopterygii</taxon>
        <taxon>Teleostei</taxon>
        <taxon>Ostariophysi</taxon>
        <taxon>Cypriniformes</taxon>
        <taxon>Catostomoidei</taxon>
        <taxon>Catostomidae</taxon>
        <taxon>Catostomus</taxon>
    </lineage>
</organism>
<dbReference type="EC" id="7.2.2.13"/>
<dbReference type="EMBL" id="X58629">
    <property type="protein sequence ID" value="CAA41483.1"/>
    <property type="molecule type" value="mRNA"/>
</dbReference>
<dbReference type="PIR" id="S14740">
    <property type="entry name" value="PWCCNM"/>
</dbReference>
<dbReference type="SMR" id="P25489"/>
<dbReference type="GO" id="GO:0016020">
    <property type="term" value="C:membrane"/>
    <property type="evidence" value="ECO:0000250"/>
    <property type="project" value="UniProtKB"/>
</dbReference>
<dbReference type="GO" id="GO:0005886">
    <property type="term" value="C:plasma membrane"/>
    <property type="evidence" value="ECO:0000250"/>
    <property type="project" value="UniProtKB"/>
</dbReference>
<dbReference type="GO" id="GO:0042383">
    <property type="term" value="C:sarcolemma"/>
    <property type="evidence" value="ECO:0007669"/>
    <property type="project" value="UniProtKB-SubCell"/>
</dbReference>
<dbReference type="GO" id="GO:0005524">
    <property type="term" value="F:ATP binding"/>
    <property type="evidence" value="ECO:0007669"/>
    <property type="project" value="UniProtKB-KW"/>
</dbReference>
<dbReference type="GO" id="GO:0016887">
    <property type="term" value="F:ATP hydrolysis activity"/>
    <property type="evidence" value="ECO:0007669"/>
    <property type="project" value="InterPro"/>
</dbReference>
<dbReference type="GO" id="GO:0046872">
    <property type="term" value="F:metal ion binding"/>
    <property type="evidence" value="ECO:0007669"/>
    <property type="project" value="UniProtKB-KW"/>
</dbReference>
<dbReference type="GO" id="GO:0005391">
    <property type="term" value="F:P-type sodium:potassium-exchanging transporter activity"/>
    <property type="evidence" value="ECO:0007669"/>
    <property type="project" value="UniProtKB-EC"/>
</dbReference>
<dbReference type="GO" id="GO:0030007">
    <property type="term" value="P:intracellular potassium ion homeostasis"/>
    <property type="evidence" value="ECO:0007669"/>
    <property type="project" value="TreeGrafter"/>
</dbReference>
<dbReference type="GO" id="GO:0006883">
    <property type="term" value="P:intracellular sodium ion homeostasis"/>
    <property type="evidence" value="ECO:0007669"/>
    <property type="project" value="TreeGrafter"/>
</dbReference>
<dbReference type="GO" id="GO:1990573">
    <property type="term" value="P:potassium ion import across plasma membrane"/>
    <property type="evidence" value="ECO:0007669"/>
    <property type="project" value="TreeGrafter"/>
</dbReference>
<dbReference type="GO" id="GO:1902600">
    <property type="term" value="P:proton transmembrane transport"/>
    <property type="evidence" value="ECO:0007669"/>
    <property type="project" value="TreeGrafter"/>
</dbReference>
<dbReference type="GO" id="GO:0036376">
    <property type="term" value="P:sodium ion export across plasma membrane"/>
    <property type="evidence" value="ECO:0007669"/>
    <property type="project" value="TreeGrafter"/>
</dbReference>
<dbReference type="CDD" id="cd02608">
    <property type="entry name" value="P-type_ATPase_Na-K_like"/>
    <property type="match status" value="1"/>
</dbReference>
<dbReference type="FunFam" id="2.70.150.10:FF:000106">
    <property type="entry name" value="Sodium/potassium-transporting ATPase subunit alpha"/>
    <property type="match status" value="1"/>
</dbReference>
<dbReference type="FunFam" id="3.40.1110.10:FF:000001">
    <property type="entry name" value="Sodium/potassium-transporting ATPase subunit alpha"/>
    <property type="match status" value="1"/>
</dbReference>
<dbReference type="FunFam" id="3.40.50.1000:FF:000004">
    <property type="entry name" value="Sodium/potassium-transporting ATPase subunit alpha"/>
    <property type="match status" value="1"/>
</dbReference>
<dbReference type="FunFam" id="1.20.1110.10:FF:000095">
    <property type="entry name" value="Sodium/potassium-transporting ATPase subunit alpha-1"/>
    <property type="match status" value="2"/>
</dbReference>
<dbReference type="Gene3D" id="3.40.1110.10">
    <property type="entry name" value="Calcium-transporting ATPase, cytoplasmic domain N"/>
    <property type="match status" value="1"/>
</dbReference>
<dbReference type="Gene3D" id="2.70.150.10">
    <property type="entry name" value="Calcium-transporting ATPase, cytoplasmic transduction domain A"/>
    <property type="match status" value="1"/>
</dbReference>
<dbReference type="Gene3D" id="1.20.1110.10">
    <property type="entry name" value="Calcium-transporting ATPase, transmembrane domain"/>
    <property type="match status" value="1"/>
</dbReference>
<dbReference type="Gene3D" id="3.40.50.1000">
    <property type="entry name" value="HAD superfamily/HAD-like"/>
    <property type="match status" value="1"/>
</dbReference>
<dbReference type="InterPro" id="IPR006068">
    <property type="entry name" value="ATPase_P-typ_cation-transptr_C"/>
</dbReference>
<dbReference type="InterPro" id="IPR004014">
    <property type="entry name" value="ATPase_P-typ_cation-transptr_N"/>
</dbReference>
<dbReference type="InterPro" id="IPR023299">
    <property type="entry name" value="ATPase_P-typ_cyto_dom_N"/>
</dbReference>
<dbReference type="InterPro" id="IPR018303">
    <property type="entry name" value="ATPase_P-typ_P_site"/>
</dbReference>
<dbReference type="InterPro" id="IPR023298">
    <property type="entry name" value="ATPase_P-typ_TM_dom_sf"/>
</dbReference>
<dbReference type="InterPro" id="IPR008250">
    <property type="entry name" value="ATPase_P-typ_transduc_dom_A_sf"/>
</dbReference>
<dbReference type="InterPro" id="IPR050510">
    <property type="entry name" value="Cation_transp_ATPase_P-type"/>
</dbReference>
<dbReference type="InterPro" id="IPR036412">
    <property type="entry name" value="HAD-like_sf"/>
</dbReference>
<dbReference type="InterPro" id="IPR023214">
    <property type="entry name" value="HAD_sf"/>
</dbReference>
<dbReference type="InterPro" id="IPR005775">
    <property type="entry name" value="P-type_ATPase_IIC"/>
</dbReference>
<dbReference type="InterPro" id="IPR001757">
    <property type="entry name" value="P_typ_ATPase"/>
</dbReference>
<dbReference type="InterPro" id="IPR044492">
    <property type="entry name" value="P_typ_ATPase_HD_dom"/>
</dbReference>
<dbReference type="NCBIfam" id="TIGR01106">
    <property type="entry name" value="ATPase-IIC_X-K"/>
    <property type="match status" value="1"/>
</dbReference>
<dbReference type="NCBIfam" id="TIGR01494">
    <property type="entry name" value="ATPase_P-type"/>
    <property type="match status" value="2"/>
</dbReference>
<dbReference type="PANTHER" id="PTHR43294">
    <property type="entry name" value="SODIUM/POTASSIUM-TRANSPORTING ATPASE SUBUNIT ALPHA"/>
    <property type="match status" value="1"/>
</dbReference>
<dbReference type="PANTHER" id="PTHR43294:SF9">
    <property type="entry name" value="SODIUM_POTASSIUM-TRANSPORTING ATPASE SUBUNIT ALPHA-1"/>
    <property type="match status" value="1"/>
</dbReference>
<dbReference type="Pfam" id="PF13246">
    <property type="entry name" value="Cation_ATPase"/>
    <property type="match status" value="1"/>
</dbReference>
<dbReference type="Pfam" id="PF00689">
    <property type="entry name" value="Cation_ATPase_C"/>
    <property type="match status" value="1"/>
</dbReference>
<dbReference type="Pfam" id="PF00690">
    <property type="entry name" value="Cation_ATPase_N"/>
    <property type="match status" value="1"/>
</dbReference>
<dbReference type="Pfam" id="PF00122">
    <property type="entry name" value="E1-E2_ATPase"/>
    <property type="match status" value="1"/>
</dbReference>
<dbReference type="PRINTS" id="PR00119">
    <property type="entry name" value="CATATPASE"/>
</dbReference>
<dbReference type="PRINTS" id="PR00121">
    <property type="entry name" value="NAKATPASE"/>
</dbReference>
<dbReference type="SFLD" id="SFLDG00002">
    <property type="entry name" value="C1.7:_P-type_atpase_like"/>
    <property type="match status" value="1"/>
</dbReference>
<dbReference type="SFLD" id="SFLDF00027">
    <property type="entry name" value="p-type_atpase"/>
    <property type="match status" value="1"/>
</dbReference>
<dbReference type="SMART" id="SM00831">
    <property type="entry name" value="Cation_ATPase_N"/>
    <property type="match status" value="1"/>
</dbReference>
<dbReference type="SUPFAM" id="SSF81653">
    <property type="entry name" value="Calcium ATPase, transduction domain A"/>
    <property type="match status" value="1"/>
</dbReference>
<dbReference type="SUPFAM" id="SSF81665">
    <property type="entry name" value="Calcium ATPase, transmembrane domain M"/>
    <property type="match status" value="1"/>
</dbReference>
<dbReference type="SUPFAM" id="SSF56784">
    <property type="entry name" value="HAD-like"/>
    <property type="match status" value="1"/>
</dbReference>
<dbReference type="SUPFAM" id="SSF81660">
    <property type="entry name" value="Metal cation-transporting ATPase, ATP-binding domain N"/>
    <property type="match status" value="1"/>
</dbReference>
<dbReference type="PROSITE" id="PS00154">
    <property type="entry name" value="ATPASE_E1_E2"/>
    <property type="match status" value="1"/>
</dbReference>
<evidence type="ECO:0000250" key="1"/>
<evidence type="ECO:0000250" key="2">
    <source>
        <dbReference type="UniProtKB" id="P05023"/>
    </source>
</evidence>
<evidence type="ECO:0000255" key="3"/>
<evidence type="ECO:0000256" key="4">
    <source>
        <dbReference type="SAM" id="MobiDB-lite"/>
    </source>
</evidence>
<evidence type="ECO:0000305" key="5"/>
<accession>P25489</accession>
<reference key="1">
    <citation type="journal article" date="1991" name="Biol. Chem. Hoppe-Seyler">
        <title>Sodium and potassium ATPase of the teleost fish Catostomus commersoni. Sequence, protein structure and evolutionary conservation of the alpha-subunit.</title>
        <authorList>
            <person name="Schoenrock C."/>
            <person name="Morley S.D."/>
            <person name="Okawara Y."/>
            <person name="Lederis K."/>
            <person name="Richter D."/>
        </authorList>
    </citation>
    <scope>NUCLEOTIDE SEQUENCE [MRNA]</scope>
    <source>
        <tissue>Hypothalamus</tissue>
    </source>
</reference>
<keyword id="KW-0067">ATP-binding</keyword>
<keyword id="KW-1003">Cell membrane</keyword>
<keyword id="KW-0406">Ion transport</keyword>
<keyword id="KW-0460">Magnesium</keyword>
<keyword id="KW-0472">Membrane</keyword>
<keyword id="KW-0479">Metal-binding</keyword>
<keyword id="KW-0547">Nucleotide-binding</keyword>
<keyword id="KW-0597">Phosphoprotein</keyword>
<keyword id="KW-0630">Potassium</keyword>
<keyword id="KW-0633">Potassium transport</keyword>
<keyword id="KW-0915">Sodium</keyword>
<keyword id="KW-0739">Sodium transport</keyword>
<keyword id="KW-0740">Sodium/potassium transport</keyword>
<keyword id="KW-1278">Translocase</keyword>
<keyword id="KW-0812">Transmembrane</keyword>
<keyword id="KW-1133">Transmembrane helix</keyword>
<keyword id="KW-0813">Transport</keyword>
<name>AT1A1_CATCO</name>
<comment type="function">
    <text evidence="2">This is the catalytic component of the active enzyme, which catalyzes the hydrolysis of ATP coupled with the exchange of sodium and potassium ions across the plasma membrane. This action creates the electrochemical gradient of sodium and potassium ions, providing the energy for active transport of various nutrients.</text>
</comment>
<comment type="catalytic activity">
    <reaction>
        <text>K(+)(out) + Na(+)(in) + ATP + H2O = K(+)(in) + Na(+)(out) + ADP + phosphate + H(+)</text>
        <dbReference type="Rhea" id="RHEA:18353"/>
        <dbReference type="ChEBI" id="CHEBI:15377"/>
        <dbReference type="ChEBI" id="CHEBI:15378"/>
        <dbReference type="ChEBI" id="CHEBI:29101"/>
        <dbReference type="ChEBI" id="CHEBI:29103"/>
        <dbReference type="ChEBI" id="CHEBI:30616"/>
        <dbReference type="ChEBI" id="CHEBI:43474"/>
        <dbReference type="ChEBI" id="CHEBI:456216"/>
        <dbReference type="EC" id="7.2.2.13"/>
    </reaction>
</comment>
<comment type="subunit">
    <text evidence="5">The sodium/potassium-transporting ATPase is composed of a catalytic alpha subunit, an auxiliary non-catalytic beta subunit and an additional regulatory subunit.</text>
</comment>
<comment type="subcellular location">
    <subcellularLocation>
        <location evidence="2">Cell membrane</location>
        <location evidence="2">Sarcolemma</location>
        <topology evidence="3">Multi-pass membrane protein</topology>
    </subcellularLocation>
</comment>
<comment type="similarity">
    <text evidence="5">Belongs to the cation transport ATPase (P-type) (TC 3.A.3) family. Type IIC subfamily.</text>
</comment>